<comment type="function">
    <text evidence="2 4 5 6 7">Main transcriptional repressor of genes involved in N-acetylglucosamine (GlcNAc) transport and utilization (PubMed:20047956, PubMed:21602348, PubMed:23667565, PubMed:24673833). Represses the expression of the nagAB and nagP operons by binding directly within their upstream regions (PubMed:21602348, PubMed:24673833). Binds to the DNA consensus sequence 5'-ATTGGTATAGACAACT-3' (PubMed:21602348). Also acts as a weak repressor of mapB expression (PubMed:16207374).</text>
</comment>
<comment type="activity regulation">
    <text evidence="4 5 7 8">Binding to DNA is allosterically inhibited by an effector molecule (PubMed:20047956, PubMed:21602348, PubMed:24673833, PubMed:25564531). Binding of the effector to the C-terminal domain leads to a conformational change that modulates binding to DNA and thereby regulates transcription of the target genes (PubMed:20047956, PubMed:25564531). Glucosamine-6-phosphate (GlcN6P) and/or N-acetylglucosamine-6-phosphate (GlcNAc6P) are putative effectors of NagR (PubMed:20047956, PubMed:21602348, PubMed:24673833, PubMed:25564531). Binding of GlcNAc6P may prevent the protein-protein interactions responsible for polymerization along the DNA, but not the specific DNA binding (PubMed:24673833).</text>
</comment>
<comment type="subunit">
    <text evidence="3 4 7 8">Homodimer (PubMed:19342794, PubMed:20047956, PubMed:25564531). Forms dimers via the C-terminal effector-binding domain (PubMed:20047956). At high concentrations, probably forms polymers along the DNA (PubMed:24673833).</text>
</comment>
<comment type="induction">
    <text evidence="6">Expression is increased by growth on N-acetylglucosamine.</text>
</comment>
<comment type="domain">
    <text evidence="4">The N-terminal region contains a canonical wHTH DNA-binding domain. It is linked via a 21 residue-long linker to the C-terminal domain, which binds the effector molecule.</text>
</comment>
<comment type="disruption phenotype">
    <text evidence="2 5 6">Deletion of the gene results in the modulation of the expression of many important genes, probably indirectly due to an excess of the crucial molecules acetate, ammonia, and fructose-6-phosphate, resulting from complete hydrolysis of GlcNAc (PubMed:21602348). Disruption of the gene induces a slight but consistent increase in MapB activity (PubMed:16207374). Deletion of the gene improves the growth rate on N-acetylglucosamine (PubMed:23667565).</text>
</comment>
<keyword id="KW-0002">3D-structure</keyword>
<keyword id="KW-0238">DNA-binding</keyword>
<keyword id="KW-1185">Reference proteome</keyword>
<keyword id="KW-0678">Repressor</keyword>
<keyword id="KW-0804">Transcription</keyword>
<keyword id="KW-0805">Transcription regulation</keyword>
<sequence length="243" mass="27507">MNINKQSPIPIYYQIMEQLKTQIKNGELQPDMPLPSEREYAEQFGISRMTVRQALSNLVNEGLLYRLKGRGTFVSKPKMEQALQGLTSFTEDMKSRGMTPGSRLIDYQLIDSTEELAAILGCGHPSSIHKITRVRLANDIPMAIESSHIPFELAGELNESHFQSSIYDHIERYNSIPISRAKQELEPSAATTEEANILGIQKGAPVLLIKRTTYLQNGTAFEHAKSVYRGDRYTFVHYMDRLS</sequence>
<proteinExistence type="evidence at protein level"/>
<name>NAGR_BACSU</name>
<protein>
    <recommendedName>
        <fullName evidence="11">HTH-type transcriptional repressor NagR</fullName>
    </recommendedName>
    <alternativeName>
        <fullName evidence="9">N-acetylglucosamine utilization regulator</fullName>
    </alternativeName>
</protein>
<gene>
    <name evidence="9" type="primary">nagR</name>
    <name evidence="10" type="synonym">yvoA</name>
    <name type="ordered locus">BSU35030</name>
</gene>
<accession>O34817</accession>
<accession>Q795E9</accession>
<organism>
    <name type="scientific">Bacillus subtilis (strain 168)</name>
    <dbReference type="NCBI Taxonomy" id="224308"/>
    <lineage>
        <taxon>Bacteria</taxon>
        <taxon>Bacillati</taxon>
        <taxon>Bacillota</taxon>
        <taxon>Bacilli</taxon>
        <taxon>Bacillales</taxon>
        <taxon>Bacillaceae</taxon>
        <taxon>Bacillus</taxon>
    </lineage>
</organism>
<feature type="chain" id="PRO_0000360728" description="HTH-type transcriptional repressor NagR">
    <location>
        <begin position="1"/>
        <end position="243"/>
    </location>
</feature>
<feature type="domain" description="HTH gntR-type" evidence="1">
    <location>
        <begin position="9"/>
        <end position="77"/>
    </location>
</feature>
<feature type="DNA-binding region" description="H-T-H motif" evidence="1">
    <location>
        <begin position="37"/>
        <end position="56"/>
    </location>
</feature>
<feature type="binding site" evidence="8 12 14">
    <location>
        <begin position="89"/>
        <end position="90"/>
    </location>
    <ligand>
        <name>alpha-D-glucosamine 6-phosphate</name>
        <dbReference type="ChEBI" id="CHEBI:75989"/>
        <note>putative effector</note>
    </ligand>
</feature>
<feature type="binding site" evidence="8 15">
    <location>
        <begin position="89"/>
        <end position="90"/>
    </location>
    <ligand>
        <name>N-acetyl-D-glucosamine 6-phosphate</name>
        <dbReference type="ChEBI" id="CHEBI:57513"/>
        <note>putative effector</note>
    </ligand>
</feature>
<feature type="binding site" evidence="8 12 14">
    <location>
        <begin position="133"/>
        <end position="135"/>
    </location>
    <ligand>
        <name>alpha-D-glucosamine 6-phosphate</name>
        <dbReference type="ChEBI" id="CHEBI:75989"/>
        <note>putative effector</note>
    </ligand>
</feature>
<feature type="binding site" evidence="8 15">
    <location>
        <begin position="133"/>
        <end position="135"/>
    </location>
    <ligand>
        <name>N-acetyl-D-glucosamine 6-phosphate</name>
        <dbReference type="ChEBI" id="CHEBI:57513"/>
        <note>putative effector</note>
    </ligand>
</feature>
<feature type="binding site" evidence="8 14">
    <location>
        <position position="145"/>
    </location>
    <ligand>
        <name>alpha-D-glucosamine 6-phosphate</name>
        <dbReference type="ChEBI" id="CHEBI:75989"/>
        <note>putative effector</note>
    </ligand>
</feature>
<feature type="binding site" evidence="8 15">
    <location>
        <position position="145"/>
    </location>
    <ligand>
        <name>N-acetyl-D-glucosamine 6-phosphate</name>
        <dbReference type="ChEBI" id="CHEBI:57513"/>
        <note>putative effector</note>
    </ligand>
</feature>
<feature type="binding site" evidence="8 12 14">
    <location>
        <begin position="165"/>
        <end position="167"/>
    </location>
    <ligand>
        <name>alpha-D-glucosamine 6-phosphate</name>
        <dbReference type="ChEBI" id="CHEBI:75989"/>
        <note>putative effector</note>
    </ligand>
</feature>
<feature type="binding site" evidence="8 15">
    <location>
        <begin position="165"/>
        <end position="167"/>
    </location>
    <ligand>
        <name>N-acetyl-D-glucosamine 6-phosphate</name>
        <dbReference type="ChEBI" id="CHEBI:57513"/>
        <note>putative effector</note>
    </ligand>
</feature>
<feature type="binding site" evidence="8 14">
    <location>
        <position position="222"/>
    </location>
    <ligand>
        <name>alpha-D-glucosamine 6-phosphate</name>
        <dbReference type="ChEBI" id="CHEBI:75989"/>
        <note>putative effector</note>
    </ligand>
</feature>
<feature type="binding site" evidence="8 15">
    <location>
        <position position="222"/>
    </location>
    <ligand>
        <name>N-acetyl-D-glucosamine 6-phosphate</name>
        <dbReference type="ChEBI" id="CHEBI:57513"/>
        <note>putative effector</note>
    </ligand>
</feature>
<feature type="binding site" evidence="8 14">
    <location>
        <position position="228"/>
    </location>
    <ligand>
        <name>alpha-D-glucosamine 6-phosphate</name>
        <dbReference type="ChEBI" id="CHEBI:75989"/>
        <note>putative effector</note>
    </ligand>
</feature>
<feature type="binding site" evidence="8 15">
    <location>
        <position position="228"/>
    </location>
    <ligand>
        <name>N-acetyl-D-glucosamine 6-phosphate</name>
        <dbReference type="ChEBI" id="CHEBI:57513"/>
        <note>putative effector</note>
    </ligand>
</feature>
<feature type="mutagenesis site" description="Abolishes GlcNAc6P binding." evidence="4">
    <original>I</original>
    <variation>E</variation>
    <location>
        <position position="209"/>
    </location>
</feature>
<feature type="mutagenesis site" description="No or little effects on GlcNAc6P binding." evidence="4">
    <original>I</original>
    <variation>L</variation>
    <location>
        <position position="209"/>
    </location>
</feature>
<feature type="mutagenesis site" description="No or little effects on GlcNAc6P binding." evidence="4">
    <original>E</original>
    <variation>D</variation>
    <location>
        <position position="222"/>
    </location>
</feature>
<feature type="mutagenesis site" description="Abolishes GlcNAc6P binding." evidence="4">
    <original>A</original>
    <variation>R</variation>
    <location>
        <position position="224"/>
    </location>
</feature>
<feature type="strand" evidence="20">
    <location>
        <begin position="7"/>
        <end position="9"/>
    </location>
</feature>
<feature type="helix" evidence="20">
    <location>
        <begin position="11"/>
        <end position="24"/>
    </location>
</feature>
<feature type="strand" evidence="18">
    <location>
        <begin position="30"/>
        <end position="32"/>
    </location>
</feature>
<feature type="helix" evidence="20">
    <location>
        <begin position="37"/>
        <end position="44"/>
    </location>
</feature>
<feature type="helix" evidence="20">
    <location>
        <begin position="48"/>
        <end position="60"/>
    </location>
</feature>
<feature type="strand" evidence="20">
    <location>
        <begin position="63"/>
        <end position="67"/>
    </location>
</feature>
<feature type="turn" evidence="20">
    <location>
        <begin position="68"/>
        <end position="70"/>
    </location>
</feature>
<feature type="strand" evidence="20">
    <location>
        <begin position="71"/>
        <end position="74"/>
    </location>
</feature>
<feature type="strand" evidence="19">
    <location>
        <begin position="79"/>
        <end position="82"/>
    </location>
</feature>
<feature type="helix" evidence="19">
    <location>
        <begin position="89"/>
        <end position="95"/>
    </location>
</feature>
<feature type="strand" evidence="19">
    <location>
        <begin position="100"/>
        <end position="111"/>
    </location>
</feature>
<feature type="helix" evidence="19">
    <location>
        <begin position="114"/>
        <end position="120"/>
    </location>
</feature>
<feature type="strand" evidence="19">
    <location>
        <begin position="127"/>
        <end position="137"/>
    </location>
</feature>
<feature type="strand" evidence="19">
    <location>
        <begin position="140"/>
        <end position="150"/>
    </location>
</feature>
<feature type="helix" evidence="19">
    <location>
        <begin position="151"/>
        <end position="153"/>
    </location>
</feature>
<feature type="helix" evidence="19">
    <location>
        <begin position="159"/>
        <end position="162"/>
    </location>
</feature>
<feature type="helix" evidence="19">
    <location>
        <begin position="166"/>
        <end position="174"/>
    </location>
</feature>
<feature type="strand" evidence="19">
    <location>
        <begin position="178"/>
        <end position="189"/>
    </location>
</feature>
<feature type="helix" evidence="19">
    <location>
        <begin position="192"/>
        <end position="198"/>
    </location>
</feature>
<feature type="strand" evidence="19">
    <location>
        <begin position="205"/>
        <end position="215"/>
    </location>
</feature>
<feature type="strand" evidence="19">
    <location>
        <begin position="220"/>
        <end position="229"/>
    </location>
</feature>
<feature type="helix" evidence="19">
    <location>
        <begin position="230"/>
        <end position="232"/>
    </location>
</feature>
<feature type="strand" evidence="19">
    <location>
        <begin position="233"/>
        <end position="240"/>
    </location>
</feature>
<dbReference type="EMBL" id="AF017113">
    <property type="protein sequence ID" value="AAC67283.1"/>
    <property type="molecule type" value="Genomic_DNA"/>
</dbReference>
<dbReference type="EMBL" id="AL009126">
    <property type="protein sequence ID" value="CAB15508.1"/>
    <property type="molecule type" value="Genomic_DNA"/>
</dbReference>
<dbReference type="PIR" id="D70044">
    <property type="entry name" value="D70044"/>
</dbReference>
<dbReference type="RefSeq" id="NP_391383.1">
    <property type="nucleotide sequence ID" value="NC_000964.3"/>
</dbReference>
<dbReference type="RefSeq" id="WP_003228089.1">
    <property type="nucleotide sequence ID" value="NZ_OZ025638.1"/>
</dbReference>
<dbReference type="PDB" id="2WV0">
    <property type="method" value="X-ray"/>
    <property type="resolution" value="2.40 A"/>
    <property type="chains" value="A/B/C/D/E/F/G/H/I/J=1-243"/>
</dbReference>
<dbReference type="PDB" id="4U0V">
    <property type="method" value="X-ray"/>
    <property type="resolution" value="2.05 A"/>
    <property type="chains" value="A/B=1-243"/>
</dbReference>
<dbReference type="PDB" id="4U0W">
    <property type="method" value="X-ray"/>
    <property type="resolution" value="2.00 A"/>
    <property type="chains" value="A/B=1-243"/>
</dbReference>
<dbReference type="PDB" id="4U0Y">
    <property type="method" value="X-ray"/>
    <property type="resolution" value="1.91 A"/>
    <property type="chains" value="A/B/C/D=1-75"/>
</dbReference>
<dbReference type="PDB" id="4WWC">
    <property type="method" value="X-ray"/>
    <property type="resolution" value="2.90 A"/>
    <property type="chains" value="A/B=1-243"/>
</dbReference>
<dbReference type="PDBsum" id="2WV0"/>
<dbReference type="PDBsum" id="4U0V"/>
<dbReference type="PDBsum" id="4U0W"/>
<dbReference type="PDBsum" id="4U0Y"/>
<dbReference type="PDBsum" id="4WWC"/>
<dbReference type="SMR" id="O34817"/>
<dbReference type="FunCoup" id="O34817">
    <property type="interactions" value="134"/>
</dbReference>
<dbReference type="STRING" id="224308.BSU35030"/>
<dbReference type="PaxDb" id="224308-BSU35030"/>
<dbReference type="EnsemblBacteria" id="CAB15508">
    <property type="protein sequence ID" value="CAB15508"/>
    <property type="gene ID" value="BSU_35030"/>
</dbReference>
<dbReference type="GeneID" id="936626"/>
<dbReference type="KEGG" id="bsu:BSU35030"/>
<dbReference type="PATRIC" id="fig|224308.179.peg.3791"/>
<dbReference type="eggNOG" id="COG2188">
    <property type="taxonomic scope" value="Bacteria"/>
</dbReference>
<dbReference type="InParanoid" id="O34817"/>
<dbReference type="OrthoDB" id="9815017at2"/>
<dbReference type="PhylomeDB" id="O34817"/>
<dbReference type="BioCyc" id="BSUB:BSU35030-MONOMER"/>
<dbReference type="EvolutionaryTrace" id="O34817"/>
<dbReference type="Proteomes" id="UP000001570">
    <property type="component" value="Chromosome"/>
</dbReference>
<dbReference type="GO" id="GO:0003677">
    <property type="term" value="F:DNA binding"/>
    <property type="evidence" value="ECO:0007669"/>
    <property type="project" value="UniProtKB-KW"/>
</dbReference>
<dbReference type="GO" id="GO:0003700">
    <property type="term" value="F:DNA-binding transcription factor activity"/>
    <property type="evidence" value="ECO:0007669"/>
    <property type="project" value="InterPro"/>
</dbReference>
<dbReference type="GO" id="GO:0045892">
    <property type="term" value="P:negative regulation of DNA-templated transcription"/>
    <property type="evidence" value="ECO:0000318"/>
    <property type="project" value="GO_Central"/>
</dbReference>
<dbReference type="CDD" id="cd07377">
    <property type="entry name" value="WHTH_GntR"/>
    <property type="match status" value="1"/>
</dbReference>
<dbReference type="FunFam" id="1.10.10.10:FF:000079">
    <property type="entry name" value="GntR family transcriptional regulator"/>
    <property type="match status" value="1"/>
</dbReference>
<dbReference type="Gene3D" id="3.40.1410.10">
    <property type="entry name" value="Chorismate lyase-like"/>
    <property type="match status" value="1"/>
</dbReference>
<dbReference type="Gene3D" id="1.10.10.10">
    <property type="entry name" value="Winged helix-like DNA-binding domain superfamily/Winged helix DNA-binding domain"/>
    <property type="match status" value="1"/>
</dbReference>
<dbReference type="InterPro" id="IPR050679">
    <property type="entry name" value="Bact_HTH_transcr_reg"/>
</dbReference>
<dbReference type="InterPro" id="IPR028978">
    <property type="entry name" value="Chorismate_lyase_/UTRA_dom_sf"/>
</dbReference>
<dbReference type="InterPro" id="IPR000524">
    <property type="entry name" value="Tscrpt_reg_HTH_GntR"/>
</dbReference>
<dbReference type="InterPro" id="IPR011663">
    <property type="entry name" value="UTRA"/>
</dbReference>
<dbReference type="InterPro" id="IPR036388">
    <property type="entry name" value="WH-like_DNA-bd_sf"/>
</dbReference>
<dbReference type="InterPro" id="IPR036390">
    <property type="entry name" value="WH_DNA-bd_sf"/>
</dbReference>
<dbReference type="PANTHER" id="PTHR44846">
    <property type="entry name" value="MANNOSYL-D-GLYCERATE TRANSPORT/METABOLISM SYSTEM REPRESSOR MNGR-RELATED"/>
    <property type="match status" value="1"/>
</dbReference>
<dbReference type="PANTHER" id="PTHR44846:SF1">
    <property type="entry name" value="MANNOSYL-D-GLYCERATE TRANSPORT_METABOLISM SYSTEM REPRESSOR MNGR-RELATED"/>
    <property type="match status" value="1"/>
</dbReference>
<dbReference type="Pfam" id="PF00392">
    <property type="entry name" value="GntR"/>
    <property type="match status" value="1"/>
</dbReference>
<dbReference type="Pfam" id="PF07702">
    <property type="entry name" value="UTRA"/>
    <property type="match status" value="1"/>
</dbReference>
<dbReference type="PRINTS" id="PR00035">
    <property type="entry name" value="HTHGNTR"/>
</dbReference>
<dbReference type="SMART" id="SM00345">
    <property type="entry name" value="HTH_GNTR"/>
    <property type="match status" value="1"/>
</dbReference>
<dbReference type="SMART" id="SM00866">
    <property type="entry name" value="UTRA"/>
    <property type="match status" value="1"/>
</dbReference>
<dbReference type="SUPFAM" id="SSF64288">
    <property type="entry name" value="Chorismate lyase-like"/>
    <property type="match status" value="1"/>
</dbReference>
<dbReference type="SUPFAM" id="SSF46785">
    <property type="entry name" value="Winged helix' DNA-binding domain"/>
    <property type="match status" value="1"/>
</dbReference>
<dbReference type="PROSITE" id="PS50949">
    <property type="entry name" value="HTH_GNTR"/>
    <property type="match status" value="1"/>
</dbReference>
<evidence type="ECO:0000255" key="1">
    <source>
        <dbReference type="PROSITE-ProRule" id="PRU00307"/>
    </source>
</evidence>
<evidence type="ECO:0000269" key="2">
    <source>
    </source>
</evidence>
<evidence type="ECO:0000269" key="3">
    <source>
    </source>
</evidence>
<evidence type="ECO:0000269" key="4">
    <source>
    </source>
</evidence>
<evidence type="ECO:0000269" key="5">
    <source>
    </source>
</evidence>
<evidence type="ECO:0000269" key="6">
    <source>
    </source>
</evidence>
<evidence type="ECO:0000269" key="7">
    <source>
    </source>
</evidence>
<evidence type="ECO:0000269" key="8">
    <source>
    </source>
</evidence>
<evidence type="ECO:0000303" key="9">
    <source>
    </source>
</evidence>
<evidence type="ECO:0000303" key="10">
    <source ref="1"/>
</evidence>
<evidence type="ECO:0000305" key="11"/>
<evidence type="ECO:0000305" key="12">
    <source>
    </source>
</evidence>
<evidence type="ECO:0007744" key="13">
    <source>
        <dbReference type="PDB" id="2WV0"/>
    </source>
</evidence>
<evidence type="ECO:0007744" key="14">
    <source>
        <dbReference type="PDB" id="4U0V"/>
    </source>
</evidence>
<evidence type="ECO:0007744" key="15">
    <source>
        <dbReference type="PDB" id="4U0W"/>
    </source>
</evidence>
<evidence type="ECO:0007744" key="16">
    <source>
        <dbReference type="PDB" id="4U0Y"/>
    </source>
</evidence>
<evidence type="ECO:0007744" key="17">
    <source>
        <dbReference type="PDB" id="4WWC"/>
    </source>
</evidence>
<evidence type="ECO:0007829" key="18">
    <source>
        <dbReference type="PDB" id="4U0V"/>
    </source>
</evidence>
<evidence type="ECO:0007829" key="19">
    <source>
        <dbReference type="PDB" id="4U0W"/>
    </source>
</evidence>
<evidence type="ECO:0007829" key="20">
    <source>
        <dbReference type="PDB" id="4U0Y"/>
    </source>
</evidence>
<reference key="1">
    <citation type="submission" date="1997-11" db="EMBL/GenBank/DDBJ databases">
        <title>Nucleotide sequence of the 300-304 chromosomal segment of Bacillus subtilis.</title>
        <authorList>
            <person name="Lazarevic V."/>
            <person name="Soldo B."/>
            <person name="Rivolta C."/>
            <person name="Reynolds S."/>
            <person name="Mauel C."/>
            <person name="Karamata D."/>
        </authorList>
    </citation>
    <scope>NUCLEOTIDE SEQUENCE [GENOMIC DNA]</scope>
</reference>
<reference key="2">
    <citation type="journal article" date="1997" name="Nature">
        <title>The complete genome sequence of the Gram-positive bacterium Bacillus subtilis.</title>
        <authorList>
            <person name="Kunst F."/>
            <person name="Ogasawara N."/>
            <person name="Moszer I."/>
            <person name="Albertini A.M."/>
            <person name="Alloni G."/>
            <person name="Azevedo V."/>
            <person name="Bertero M.G."/>
            <person name="Bessieres P."/>
            <person name="Bolotin A."/>
            <person name="Borchert S."/>
            <person name="Borriss R."/>
            <person name="Boursier L."/>
            <person name="Brans A."/>
            <person name="Braun M."/>
            <person name="Brignell S.C."/>
            <person name="Bron S."/>
            <person name="Brouillet S."/>
            <person name="Bruschi C.V."/>
            <person name="Caldwell B."/>
            <person name="Capuano V."/>
            <person name="Carter N.M."/>
            <person name="Choi S.-K."/>
            <person name="Codani J.-J."/>
            <person name="Connerton I.F."/>
            <person name="Cummings N.J."/>
            <person name="Daniel R.A."/>
            <person name="Denizot F."/>
            <person name="Devine K.M."/>
            <person name="Duesterhoeft A."/>
            <person name="Ehrlich S.D."/>
            <person name="Emmerson P.T."/>
            <person name="Entian K.-D."/>
            <person name="Errington J."/>
            <person name="Fabret C."/>
            <person name="Ferrari E."/>
            <person name="Foulger D."/>
            <person name="Fritz C."/>
            <person name="Fujita M."/>
            <person name="Fujita Y."/>
            <person name="Fuma S."/>
            <person name="Galizzi A."/>
            <person name="Galleron N."/>
            <person name="Ghim S.-Y."/>
            <person name="Glaser P."/>
            <person name="Goffeau A."/>
            <person name="Golightly E.J."/>
            <person name="Grandi G."/>
            <person name="Guiseppi G."/>
            <person name="Guy B.J."/>
            <person name="Haga K."/>
            <person name="Haiech J."/>
            <person name="Harwood C.R."/>
            <person name="Henaut A."/>
            <person name="Hilbert H."/>
            <person name="Holsappel S."/>
            <person name="Hosono S."/>
            <person name="Hullo M.-F."/>
            <person name="Itaya M."/>
            <person name="Jones L.-M."/>
            <person name="Joris B."/>
            <person name="Karamata D."/>
            <person name="Kasahara Y."/>
            <person name="Klaerr-Blanchard M."/>
            <person name="Klein C."/>
            <person name="Kobayashi Y."/>
            <person name="Koetter P."/>
            <person name="Koningstein G."/>
            <person name="Krogh S."/>
            <person name="Kumano M."/>
            <person name="Kurita K."/>
            <person name="Lapidus A."/>
            <person name="Lardinois S."/>
            <person name="Lauber J."/>
            <person name="Lazarevic V."/>
            <person name="Lee S.-M."/>
            <person name="Levine A."/>
            <person name="Liu H."/>
            <person name="Masuda S."/>
            <person name="Mauel C."/>
            <person name="Medigue C."/>
            <person name="Medina N."/>
            <person name="Mellado R.P."/>
            <person name="Mizuno M."/>
            <person name="Moestl D."/>
            <person name="Nakai S."/>
            <person name="Noback M."/>
            <person name="Noone D."/>
            <person name="O'Reilly M."/>
            <person name="Ogawa K."/>
            <person name="Ogiwara A."/>
            <person name="Oudega B."/>
            <person name="Park S.-H."/>
            <person name="Parro V."/>
            <person name="Pohl T.M."/>
            <person name="Portetelle D."/>
            <person name="Porwollik S."/>
            <person name="Prescott A.M."/>
            <person name="Presecan E."/>
            <person name="Pujic P."/>
            <person name="Purnelle B."/>
            <person name="Rapoport G."/>
            <person name="Rey M."/>
            <person name="Reynolds S."/>
            <person name="Rieger M."/>
            <person name="Rivolta C."/>
            <person name="Rocha E."/>
            <person name="Roche B."/>
            <person name="Rose M."/>
            <person name="Sadaie Y."/>
            <person name="Sato T."/>
            <person name="Scanlan E."/>
            <person name="Schleich S."/>
            <person name="Schroeter R."/>
            <person name="Scoffone F."/>
            <person name="Sekiguchi J."/>
            <person name="Sekowska A."/>
            <person name="Seror S.J."/>
            <person name="Serror P."/>
            <person name="Shin B.-S."/>
            <person name="Soldo B."/>
            <person name="Sorokin A."/>
            <person name="Tacconi E."/>
            <person name="Takagi T."/>
            <person name="Takahashi H."/>
            <person name="Takemaru K."/>
            <person name="Takeuchi M."/>
            <person name="Tamakoshi A."/>
            <person name="Tanaka T."/>
            <person name="Terpstra P."/>
            <person name="Tognoni A."/>
            <person name="Tosato V."/>
            <person name="Uchiyama S."/>
            <person name="Vandenbol M."/>
            <person name="Vannier F."/>
            <person name="Vassarotti A."/>
            <person name="Viari A."/>
            <person name="Wambutt R."/>
            <person name="Wedler E."/>
            <person name="Wedler H."/>
            <person name="Weitzenegger T."/>
            <person name="Winters P."/>
            <person name="Wipat A."/>
            <person name="Yamamoto H."/>
            <person name="Yamane K."/>
            <person name="Yasumoto K."/>
            <person name="Yata K."/>
            <person name="Yoshida K."/>
            <person name="Yoshikawa H.-F."/>
            <person name="Zumstein E."/>
            <person name="Yoshikawa H."/>
            <person name="Danchin A."/>
        </authorList>
    </citation>
    <scope>NUCLEOTIDE SEQUENCE [LARGE SCALE GENOMIC DNA]</scope>
    <source>
        <strain>168</strain>
    </source>
</reference>
<reference key="3">
    <citation type="journal article" date="2005" name="BMC Microbiol.">
        <title>The two authentic methionine aminopeptidase genes are differentially expressed in Bacillus subtilis.</title>
        <authorList>
            <person name="You C."/>
            <person name="Lu H."/>
            <person name="Sekowska A."/>
            <person name="Fang G."/>
            <person name="Wang Y."/>
            <person name="Gilles A.-M."/>
            <person name="Danchin A."/>
        </authorList>
    </citation>
    <scope>FUNCTION</scope>
    <scope>DISRUPTION PHENOTYPE</scope>
</reference>
<reference key="4">
    <citation type="journal article" date="2009" name="Acta Crystallogr. F">
        <title>Cloning, expression, purification, crystallization and preliminary X-ray diffraction analysis of YvoA from Bacillus subtilis.</title>
        <authorList>
            <person name="Resch M."/>
            <person name="Roth H.M."/>
            <person name="Kottmair M."/>
            <person name="Sevvana M."/>
            <person name="Bertram R."/>
            <person name="Titgemeyer F."/>
            <person name="Muller Y.A."/>
        </authorList>
    </citation>
    <scope>SUBUNIT</scope>
    <scope>CRYSTALLIZATION</scope>
    <source>
        <strain>168</strain>
    </source>
</reference>
<reference key="5">
    <citation type="journal article" date="2011" name="J. Bacteriol.">
        <title>Regulon of the N-acetylglucosamine utilization regulator NagR in Bacillus subtilis.</title>
        <authorList>
            <person name="Bertram R."/>
            <person name="Rigali S."/>
            <person name="Wood N."/>
            <person name="Lulko A.T."/>
            <person name="Kuipers O.P."/>
            <person name="Titgemeyer F."/>
        </authorList>
    </citation>
    <scope>FUNCTION</scope>
    <scope>DNA-BINDING</scope>
    <scope>ACTIVITY REGULATION</scope>
    <scope>DISRUPTION PHENOTYPE</scope>
</reference>
<reference key="6">
    <citation type="journal article" date="2013" name="PLoS ONE">
        <title>The use of amino sugars by Bacillus subtilis: presence of a unique operon for the catabolism of glucosamine.</title>
        <authorList>
            <person name="Gaugue I."/>
            <person name="Oberto J."/>
            <person name="Putzer H."/>
            <person name="Plumbridge J."/>
        </authorList>
    </citation>
    <scope>FUNCTION</scope>
    <scope>INDUCTION</scope>
    <scope>DISRUPTION PHENOTYPE</scope>
    <source>
        <strain>168</strain>
    </source>
</reference>
<reference key="7">
    <citation type="journal article" date="2014" name="Mol. Microbiol.">
        <title>Regulation of amino sugar utilization in Bacillus subtilis by the GntR family regulators, NagR and GamR.</title>
        <authorList>
            <person name="Gaugue I."/>
            <person name="Oberto J."/>
            <person name="Plumbridge J."/>
        </authorList>
    </citation>
    <scope>FUNCTION</scope>
    <scope>DNA-BINDING</scope>
    <scope>ACTIVITY REGULATION</scope>
    <scope>SUBUNIT</scope>
</reference>
<reference evidence="13" key="8">
    <citation type="journal article" date="2010" name="Nucleic Acids Res.">
        <title>Insight into the induction mechanism of the GntR/HutC bacterial transcription regulator YvoA.</title>
        <authorList>
            <person name="Resch M."/>
            <person name="Schiltz E."/>
            <person name="Titgemeyer F."/>
            <person name="Muller Y.A."/>
        </authorList>
    </citation>
    <scope>X-RAY CRYSTALLOGRAPHY (2.40 ANGSTROMS)</scope>
    <scope>FUNCTION</scope>
    <scope>DNA-BINDING</scope>
    <scope>ACTIVITY REGULATION</scope>
    <scope>SUBUNIT</scope>
    <scope>DOMAIN</scope>
    <scope>MUTAGENESIS OF ILE-209; GLU-222 AND ALA-224</scope>
</reference>
<reference evidence="14 15 16 17" key="9">
    <citation type="journal article" date="2015" name="Nucleic Acids Res.">
        <title>Structural insight into operator dre-sites recognition and effector binding in the GntR/HutC transcription regulator NagR.</title>
        <authorList>
            <person name="Fillenberg S.B."/>
            <person name="Grau F.C."/>
            <person name="Seidel G."/>
            <person name="Muller Y.A."/>
        </authorList>
    </citation>
    <scope>X-RAY CRYSTALLOGRAPHY (1.91 ANGSTROMS) IN COMPLEXES WITH PUTATIVE EFFECTORS GLCN6P AND GLCNAC6P AND DNA</scope>
    <scope>ACTIVITY REGULATION</scope>
    <scope>SUBUNIT</scope>
</reference>